<name>RS21_SHESH</name>
<sequence>MPIIKVRDNEPFDVALRRFKRSCEKAGILADVRAREFYEKPTTARKRAKAAAIKRLAKKLSRENARRVRLY</sequence>
<keyword id="KW-1185">Reference proteome</keyword>
<keyword id="KW-0687">Ribonucleoprotein</keyword>
<keyword id="KW-0689">Ribosomal protein</keyword>
<proteinExistence type="inferred from homology"/>
<gene>
    <name evidence="1" type="primary">rpsU</name>
    <name type="ordered locus">Ssed_1075</name>
</gene>
<dbReference type="EMBL" id="CP000821">
    <property type="protein sequence ID" value="ABV35686.1"/>
    <property type="molecule type" value="Genomic_DNA"/>
</dbReference>
<dbReference type="RefSeq" id="WP_012141422.1">
    <property type="nucleotide sequence ID" value="NC_009831.1"/>
</dbReference>
<dbReference type="SMR" id="A8FS63"/>
<dbReference type="STRING" id="425104.Ssed_1075"/>
<dbReference type="KEGG" id="sse:Ssed_1075"/>
<dbReference type="eggNOG" id="COG0828">
    <property type="taxonomic scope" value="Bacteria"/>
</dbReference>
<dbReference type="HOGENOM" id="CLU_159258_1_0_6"/>
<dbReference type="OrthoDB" id="9799244at2"/>
<dbReference type="Proteomes" id="UP000002015">
    <property type="component" value="Chromosome"/>
</dbReference>
<dbReference type="GO" id="GO:1990904">
    <property type="term" value="C:ribonucleoprotein complex"/>
    <property type="evidence" value="ECO:0007669"/>
    <property type="project" value="UniProtKB-KW"/>
</dbReference>
<dbReference type="GO" id="GO:0005840">
    <property type="term" value="C:ribosome"/>
    <property type="evidence" value="ECO:0007669"/>
    <property type="project" value="UniProtKB-KW"/>
</dbReference>
<dbReference type="GO" id="GO:0003735">
    <property type="term" value="F:structural constituent of ribosome"/>
    <property type="evidence" value="ECO:0007669"/>
    <property type="project" value="InterPro"/>
</dbReference>
<dbReference type="GO" id="GO:0006412">
    <property type="term" value="P:translation"/>
    <property type="evidence" value="ECO:0007669"/>
    <property type="project" value="UniProtKB-UniRule"/>
</dbReference>
<dbReference type="Gene3D" id="1.20.5.1150">
    <property type="entry name" value="Ribosomal protein S8"/>
    <property type="match status" value="1"/>
</dbReference>
<dbReference type="HAMAP" id="MF_00358">
    <property type="entry name" value="Ribosomal_bS21"/>
    <property type="match status" value="1"/>
</dbReference>
<dbReference type="InterPro" id="IPR001911">
    <property type="entry name" value="Ribosomal_bS21"/>
</dbReference>
<dbReference type="InterPro" id="IPR018278">
    <property type="entry name" value="Ribosomal_bS21_CS"/>
</dbReference>
<dbReference type="InterPro" id="IPR038380">
    <property type="entry name" value="Ribosomal_bS21_sf"/>
</dbReference>
<dbReference type="NCBIfam" id="TIGR00030">
    <property type="entry name" value="S21p"/>
    <property type="match status" value="1"/>
</dbReference>
<dbReference type="PANTHER" id="PTHR21109">
    <property type="entry name" value="MITOCHONDRIAL 28S RIBOSOMAL PROTEIN S21"/>
    <property type="match status" value="1"/>
</dbReference>
<dbReference type="PANTHER" id="PTHR21109:SF22">
    <property type="entry name" value="SMALL RIBOSOMAL SUBUNIT PROTEIN BS21"/>
    <property type="match status" value="1"/>
</dbReference>
<dbReference type="Pfam" id="PF01165">
    <property type="entry name" value="Ribosomal_S21"/>
    <property type="match status" value="1"/>
</dbReference>
<dbReference type="PRINTS" id="PR00976">
    <property type="entry name" value="RIBOSOMALS21"/>
</dbReference>
<dbReference type="PROSITE" id="PS01181">
    <property type="entry name" value="RIBOSOMAL_S21"/>
    <property type="match status" value="1"/>
</dbReference>
<comment type="similarity">
    <text evidence="1">Belongs to the bacterial ribosomal protein bS21 family.</text>
</comment>
<reference key="1">
    <citation type="submission" date="2007-08" db="EMBL/GenBank/DDBJ databases">
        <title>Complete sequence of Shewanella sediminis HAW-EB3.</title>
        <authorList>
            <consortium name="US DOE Joint Genome Institute"/>
            <person name="Copeland A."/>
            <person name="Lucas S."/>
            <person name="Lapidus A."/>
            <person name="Barry K."/>
            <person name="Glavina del Rio T."/>
            <person name="Dalin E."/>
            <person name="Tice H."/>
            <person name="Pitluck S."/>
            <person name="Chertkov O."/>
            <person name="Brettin T."/>
            <person name="Bruce D."/>
            <person name="Detter J.C."/>
            <person name="Han C."/>
            <person name="Schmutz J."/>
            <person name="Larimer F."/>
            <person name="Land M."/>
            <person name="Hauser L."/>
            <person name="Kyrpides N."/>
            <person name="Kim E."/>
            <person name="Zhao J.-S."/>
            <person name="Richardson P."/>
        </authorList>
    </citation>
    <scope>NUCLEOTIDE SEQUENCE [LARGE SCALE GENOMIC DNA]</scope>
    <source>
        <strain>HAW-EB3</strain>
    </source>
</reference>
<feature type="chain" id="PRO_1000079422" description="Small ribosomal subunit protein bS21">
    <location>
        <begin position="1"/>
        <end position="71"/>
    </location>
</feature>
<protein>
    <recommendedName>
        <fullName evidence="1">Small ribosomal subunit protein bS21</fullName>
    </recommendedName>
    <alternativeName>
        <fullName evidence="2">30S ribosomal protein S21</fullName>
    </alternativeName>
</protein>
<organism>
    <name type="scientific">Shewanella sediminis (strain HAW-EB3)</name>
    <dbReference type="NCBI Taxonomy" id="425104"/>
    <lineage>
        <taxon>Bacteria</taxon>
        <taxon>Pseudomonadati</taxon>
        <taxon>Pseudomonadota</taxon>
        <taxon>Gammaproteobacteria</taxon>
        <taxon>Alteromonadales</taxon>
        <taxon>Shewanellaceae</taxon>
        <taxon>Shewanella</taxon>
    </lineage>
</organism>
<evidence type="ECO:0000255" key="1">
    <source>
        <dbReference type="HAMAP-Rule" id="MF_00358"/>
    </source>
</evidence>
<evidence type="ECO:0000305" key="2"/>
<accession>A8FS63</accession>